<sequence length="109" mass="12942">MLRFKKTPDEVKEMIKLAIKKGYRQIKISSVNPNEFLLRFDGRMWIMGFEFLSDKEIKYSCFENYSFKCILETDAKKVREFLEEIYSKSKIVNGRVKEIPTDVFQVVVA</sequence>
<reference key="1">
    <citation type="journal article" date="1996" name="Science">
        <title>Complete genome sequence of the methanogenic archaeon, Methanococcus jannaschii.</title>
        <authorList>
            <person name="Bult C.J."/>
            <person name="White O."/>
            <person name="Olsen G.J."/>
            <person name="Zhou L."/>
            <person name="Fleischmann R.D."/>
            <person name="Sutton G.G."/>
            <person name="Blake J.A."/>
            <person name="FitzGerald L.M."/>
            <person name="Clayton R.A."/>
            <person name="Gocayne J.D."/>
            <person name="Kerlavage A.R."/>
            <person name="Dougherty B.A."/>
            <person name="Tomb J.-F."/>
            <person name="Adams M.D."/>
            <person name="Reich C.I."/>
            <person name="Overbeek R."/>
            <person name="Kirkness E.F."/>
            <person name="Weinstock K.G."/>
            <person name="Merrick J.M."/>
            <person name="Glodek A."/>
            <person name="Scott J.L."/>
            <person name="Geoghagen N.S.M."/>
            <person name="Weidman J.F."/>
            <person name="Fuhrmann J.L."/>
            <person name="Nguyen D."/>
            <person name="Utterback T.R."/>
            <person name="Kelley J.M."/>
            <person name="Peterson J.D."/>
            <person name="Sadow P.W."/>
            <person name="Hanna M.C."/>
            <person name="Cotton M.D."/>
            <person name="Roberts K.M."/>
            <person name="Hurst M.A."/>
            <person name="Kaine B.P."/>
            <person name="Borodovsky M."/>
            <person name="Klenk H.-P."/>
            <person name="Fraser C.M."/>
            <person name="Smith H.O."/>
            <person name="Woese C.R."/>
            <person name="Venter J.C."/>
        </authorList>
    </citation>
    <scope>NUCLEOTIDE SEQUENCE [LARGE SCALE GENOMIC DNA]</scope>
    <source>
        <strain>ATCC 43067 / DSM 2661 / JAL-1 / JCM 10045 / NBRC 100440</strain>
    </source>
</reference>
<proteinExistence type="predicted"/>
<organism>
    <name type="scientific">Methanocaldococcus jannaschii (strain ATCC 43067 / DSM 2661 / JAL-1 / JCM 10045 / NBRC 100440)</name>
    <name type="common">Methanococcus jannaschii</name>
    <dbReference type="NCBI Taxonomy" id="243232"/>
    <lineage>
        <taxon>Archaea</taxon>
        <taxon>Methanobacteriati</taxon>
        <taxon>Methanobacteriota</taxon>
        <taxon>Methanomada group</taxon>
        <taxon>Methanococci</taxon>
        <taxon>Methanococcales</taxon>
        <taxon>Methanocaldococcaceae</taxon>
        <taxon>Methanocaldococcus</taxon>
    </lineage>
</organism>
<gene>
    <name type="ordered locus">MJ0355</name>
</gene>
<accession>Q57801</accession>
<protein>
    <recommendedName>
        <fullName>Uncharacterized protein MJ0355</fullName>
    </recommendedName>
</protein>
<keyword id="KW-1185">Reference proteome</keyword>
<name>Y355_METJA</name>
<dbReference type="EMBL" id="L77117">
    <property type="protein sequence ID" value="AAB98347.1"/>
    <property type="molecule type" value="Genomic_DNA"/>
</dbReference>
<dbReference type="PIR" id="C64344">
    <property type="entry name" value="C64344"/>
</dbReference>
<dbReference type="RefSeq" id="WP_010869854.1">
    <property type="nucleotide sequence ID" value="NC_000909.1"/>
</dbReference>
<dbReference type="SMR" id="Q57801"/>
<dbReference type="STRING" id="243232.MJ_0355"/>
<dbReference type="PaxDb" id="243232-MJ_0355"/>
<dbReference type="EnsemblBacteria" id="AAB98347">
    <property type="protein sequence ID" value="AAB98347"/>
    <property type="gene ID" value="MJ_0355"/>
</dbReference>
<dbReference type="GeneID" id="1451212"/>
<dbReference type="KEGG" id="mja:MJ_0355"/>
<dbReference type="eggNOG" id="arCOG09656">
    <property type="taxonomic scope" value="Archaea"/>
</dbReference>
<dbReference type="HOGENOM" id="CLU_2177887_0_0_2"/>
<dbReference type="InParanoid" id="Q57801"/>
<dbReference type="OrthoDB" id="376160at2157"/>
<dbReference type="Proteomes" id="UP000000805">
    <property type="component" value="Chromosome"/>
</dbReference>
<feature type="chain" id="PRO_0000106826" description="Uncharacterized protein MJ0355">
    <location>
        <begin position="1"/>
        <end position="109"/>
    </location>
</feature>